<accession>Q2LSD6</accession>
<comment type="function">
    <text evidence="1">Nucleoside triphosphate pyrophosphatase that hydrolyzes dTTP and UTP. May have a dual role in cell division arrest and in preventing the incorporation of modified nucleotides into cellular nucleic acids.</text>
</comment>
<comment type="catalytic activity">
    <reaction evidence="1">
        <text>dTTP + H2O = dTMP + diphosphate + H(+)</text>
        <dbReference type="Rhea" id="RHEA:28534"/>
        <dbReference type="ChEBI" id="CHEBI:15377"/>
        <dbReference type="ChEBI" id="CHEBI:15378"/>
        <dbReference type="ChEBI" id="CHEBI:33019"/>
        <dbReference type="ChEBI" id="CHEBI:37568"/>
        <dbReference type="ChEBI" id="CHEBI:63528"/>
        <dbReference type="EC" id="3.6.1.9"/>
    </reaction>
</comment>
<comment type="catalytic activity">
    <reaction evidence="1">
        <text>UTP + H2O = UMP + diphosphate + H(+)</text>
        <dbReference type="Rhea" id="RHEA:29395"/>
        <dbReference type="ChEBI" id="CHEBI:15377"/>
        <dbReference type="ChEBI" id="CHEBI:15378"/>
        <dbReference type="ChEBI" id="CHEBI:33019"/>
        <dbReference type="ChEBI" id="CHEBI:46398"/>
        <dbReference type="ChEBI" id="CHEBI:57865"/>
        <dbReference type="EC" id="3.6.1.9"/>
    </reaction>
</comment>
<comment type="cofactor">
    <cofactor evidence="1">
        <name>a divalent metal cation</name>
        <dbReference type="ChEBI" id="CHEBI:60240"/>
    </cofactor>
</comment>
<comment type="subcellular location">
    <subcellularLocation>
        <location evidence="1">Cytoplasm</location>
    </subcellularLocation>
</comment>
<comment type="similarity">
    <text evidence="1">Belongs to the Maf family. YhdE subfamily.</text>
</comment>
<comment type="sequence caution" evidence="2">
    <conflict type="erroneous initiation">
        <sequence resource="EMBL-CDS" id="ABC76999"/>
    </conflict>
</comment>
<feature type="chain" id="PRO_0000267452" description="dTTP/UTP pyrophosphatase">
    <location>
        <begin position="1"/>
        <end position="205"/>
    </location>
</feature>
<feature type="active site" description="Proton acceptor" evidence="1">
    <location>
        <position position="71"/>
    </location>
</feature>
<feature type="site" description="Important for substrate specificity" evidence="1">
    <location>
        <position position="14"/>
    </location>
</feature>
<feature type="site" description="Important for substrate specificity" evidence="1">
    <location>
        <position position="72"/>
    </location>
</feature>
<feature type="site" description="Important for substrate specificity" evidence="1">
    <location>
        <position position="156"/>
    </location>
</feature>
<evidence type="ECO:0000255" key="1">
    <source>
        <dbReference type="HAMAP-Rule" id="MF_00528"/>
    </source>
</evidence>
<evidence type="ECO:0000305" key="2"/>
<organism>
    <name type="scientific">Syntrophus aciditrophicus (strain SB)</name>
    <dbReference type="NCBI Taxonomy" id="56780"/>
    <lineage>
        <taxon>Bacteria</taxon>
        <taxon>Pseudomonadati</taxon>
        <taxon>Thermodesulfobacteriota</taxon>
        <taxon>Syntrophia</taxon>
        <taxon>Syntrophales</taxon>
        <taxon>Syntrophaceae</taxon>
        <taxon>Syntrophus</taxon>
    </lineage>
</organism>
<reference key="1">
    <citation type="journal article" date="2007" name="Proc. Natl. Acad. Sci. U.S.A.">
        <title>The genome of Syntrophus aciditrophicus: life at the thermodynamic limit of microbial growth.</title>
        <authorList>
            <person name="McInerney M.J."/>
            <person name="Rohlin L."/>
            <person name="Mouttaki H."/>
            <person name="Kim U."/>
            <person name="Krupp R.S."/>
            <person name="Rios-Hernandez L."/>
            <person name="Sieber J."/>
            <person name="Struchtemeyer C.G."/>
            <person name="Bhattacharyya A."/>
            <person name="Campbell J.W."/>
            <person name="Gunsalus R.P."/>
        </authorList>
    </citation>
    <scope>NUCLEOTIDE SEQUENCE [LARGE SCALE GENOMIC DNA]</scope>
    <source>
        <strain>SB</strain>
    </source>
</reference>
<dbReference type="EC" id="3.6.1.9" evidence="1"/>
<dbReference type="EMBL" id="CP000252">
    <property type="protein sequence ID" value="ABC76999.1"/>
    <property type="status" value="ALT_INIT"/>
    <property type="molecule type" value="Genomic_DNA"/>
</dbReference>
<dbReference type="SMR" id="Q2LSD6"/>
<dbReference type="FunCoup" id="Q2LSD6">
    <property type="interactions" value="291"/>
</dbReference>
<dbReference type="STRING" id="56780.SYN_00572"/>
<dbReference type="KEGG" id="sat:SYN_00572"/>
<dbReference type="eggNOG" id="COG0424">
    <property type="taxonomic scope" value="Bacteria"/>
</dbReference>
<dbReference type="HOGENOM" id="CLU_040416_2_1_7"/>
<dbReference type="InParanoid" id="Q2LSD6"/>
<dbReference type="Proteomes" id="UP000001933">
    <property type="component" value="Chromosome"/>
</dbReference>
<dbReference type="GO" id="GO:0005737">
    <property type="term" value="C:cytoplasm"/>
    <property type="evidence" value="ECO:0007669"/>
    <property type="project" value="UniProtKB-SubCell"/>
</dbReference>
<dbReference type="GO" id="GO:0036218">
    <property type="term" value="F:dTTP diphosphatase activity"/>
    <property type="evidence" value="ECO:0007669"/>
    <property type="project" value="RHEA"/>
</dbReference>
<dbReference type="GO" id="GO:0036221">
    <property type="term" value="F:UTP diphosphatase activity"/>
    <property type="evidence" value="ECO:0007669"/>
    <property type="project" value="RHEA"/>
</dbReference>
<dbReference type="GO" id="GO:0009117">
    <property type="term" value="P:nucleotide metabolic process"/>
    <property type="evidence" value="ECO:0007669"/>
    <property type="project" value="UniProtKB-KW"/>
</dbReference>
<dbReference type="CDD" id="cd00555">
    <property type="entry name" value="Maf"/>
    <property type="match status" value="1"/>
</dbReference>
<dbReference type="FunFam" id="3.90.950.10:FF:000005">
    <property type="entry name" value="7-methyl-GTP pyrophosphatase"/>
    <property type="match status" value="1"/>
</dbReference>
<dbReference type="Gene3D" id="3.90.950.10">
    <property type="match status" value="1"/>
</dbReference>
<dbReference type="HAMAP" id="MF_00528">
    <property type="entry name" value="Maf"/>
    <property type="match status" value="1"/>
</dbReference>
<dbReference type="InterPro" id="IPR029001">
    <property type="entry name" value="ITPase-like_fam"/>
</dbReference>
<dbReference type="InterPro" id="IPR003697">
    <property type="entry name" value="Maf-like"/>
</dbReference>
<dbReference type="NCBIfam" id="TIGR00172">
    <property type="entry name" value="maf"/>
    <property type="match status" value="1"/>
</dbReference>
<dbReference type="PANTHER" id="PTHR43213">
    <property type="entry name" value="BIFUNCTIONAL DTTP/UTP PYROPHOSPHATASE/METHYLTRANSFERASE PROTEIN-RELATED"/>
    <property type="match status" value="1"/>
</dbReference>
<dbReference type="PANTHER" id="PTHR43213:SF5">
    <property type="entry name" value="BIFUNCTIONAL DTTP_UTP PYROPHOSPHATASE_METHYLTRANSFERASE PROTEIN-RELATED"/>
    <property type="match status" value="1"/>
</dbReference>
<dbReference type="Pfam" id="PF02545">
    <property type="entry name" value="Maf"/>
    <property type="match status" value="1"/>
</dbReference>
<dbReference type="PIRSF" id="PIRSF006305">
    <property type="entry name" value="Maf"/>
    <property type="match status" value="1"/>
</dbReference>
<dbReference type="SUPFAM" id="SSF52972">
    <property type="entry name" value="ITPase-like"/>
    <property type="match status" value="1"/>
</dbReference>
<gene>
    <name type="ordered locus">SYNAS_11200</name>
    <name type="ORF">SYN_00572</name>
</gene>
<proteinExistence type="inferred from homology"/>
<name>NTPPA_SYNAS</name>
<keyword id="KW-0963">Cytoplasm</keyword>
<keyword id="KW-0378">Hydrolase</keyword>
<keyword id="KW-0546">Nucleotide metabolism</keyword>
<keyword id="KW-1185">Reference proteome</keyword>
<sequence>MLTEKLILASASPRRAELLQLLGVDFEVIPSHMDETSRNDETPPEHVQRLSSEKAEMIAALFPDALVLGADTVVVIAGRMLGKPGNPGEARDMLKRLSGREHIVYTGFSLIQKKKGRRRTQVVRSAVLFKEIPEDEISWYVSSEEPYDKAGGYAVQGMGAFFIREIRGSYTNVMGLPLSEVVETLKDMGSLTFSGDQHDRGSNQE</sequence>
<protein>
    <recommendedName>
        <fullName evidence="1">dTTP/UTP pyrophosphatase</fullName>
        <shortName evidence="1">dTTPase/UTPase</shortName>
        <ecNumber evidence="1">3.6.1.9</ecNumber>
    </recommendedName>
    <alternativeName>
        <fullName evidence="1">Nucleoside triphosphate pyrophosphatase</fullName>
    </alternativeName>
    <alternativeName>
        <fullName evidence="1">Nucleotide pyrophosphatase</fullName>
        <shortName evidence="1">Nucleotide PPase</shortName>
    </alternativeName>
</protein>